<accession>Q18G74</accession>
<organism>
    <name type="scientific">Haloquadratum walsbyi (strain DSM 16790 / HBSQ001)</name>
    <dbReference type="NCBI Taxonomy" id="362976"/>
    <lineage>
        <taxon>Archaea</taxon>
        <taxon>Methanobacteriati</taxon>
        <taxon>Methanobacteriota</taxon>
        <taxon>Stenosarchaea group</taxon>
        <taxon>Halobacteria</taxon>
        <taxon>Halobacteriales</taxon>
        <taxon>Haloferacaceae</taxon>
        <taxon>Haloquadratum</taxon>
    </lineage>
</organism>
<gene>
    <name evidence="1" type="primary">rpl11</name>
    <name type="ordered locus">HQ_2922A</name>
</gene>
<keyword id="KW-1185">Reference proteome</keyword>
<keyword id="KW-0687">Ribonucleoprotein</keyword>
<keyword id="KW-0689">Ribosomal protein</keyword>
<keyword id="KW-0694">RNA-binding</keyword>
<keyword id="KW-0699">rRNA-binding</keyword>
<evidence type="ECO:0000255" key="1">
    <source>
        <dbReference type="HAMAP-Rule" id="MF_00736"/>
    </source>
</evidence>
<evidence type="ECO:0000256" key="2">
    <source>
        <dbReference type="SAM" id="MobiDB-lite"/>
    </source>
</evidence>
<evidence type="ECO:0000305" key="3"/>
<comment type="function">
    <text evidence="1">Forms part of the ribosomal stalk which helps the ribosome interact with GTP-bound translation factors.</text>
</comment>
<comment type="subunit">
    <text evidence="1">Part of the ribosomal stalk of the 50S ribosomal subunit. Interacts with L10 and the large rRNA to form the base of the stalk. L10 forms an elongated spine to which L12 dimers bind in a sequential fashion forming a multimeric L10(L12)X complex.</text>
</comment>
<comment type="similarity">
    <text evidence="1">Belongs to the universal ribosomal protein uL11 family.</text>
</comment>
<sequence length="157" mass="16686">MAGTIEVLIPGGEANPGPPLGPELGPTPVDVQDVVQTINDETDAFDGMEVPVTVEYEDTGDFSISVGVPPTAELIKDEAGFESGSGEPQENFVANMSVDQVQKIAEQKSSDLLSYDTFNAAKEVVGTCTSLGVTIDGNNPREFKSRMEDGEYDDILK</sequence>
<name>RL11_HALWD</name>
<dbReference type="EMBL" id="AM180088">
    <property type="protein sequence ID" value="CAJ53027.1"/>
    <property type="molecule type" value="Genomic_DNA"/>
</dbReference>
<dbReference type="RefSeq" id="WP_011572137.1">
    <property type="nucleotide sequence ID" value="NC_008212.1"/>
</dbReference>
<dbReference type="SMR" id="Q18G74"/>
<dbReference type="STRING" id="362976.HQ_2922A"/>
<dbReference type="GeneID" id="4194601"/>
<dbReference type="KEGG" id="hwa:HQ_2922A"/>
<dbReference type="eggNOG" id="arCOG04372">
    <property type="taxonomic scope" value="Archaea"/>
</dbReference>
<dbReference type="HOGENOM" id="CLU_074237_4_0_2"/>
<dbReference type="Proteomes" id="UP000001975">
    <property type="component" value="Chromosome"/>
</dbReference>
<dbReference type="GO" id="GO:0015934">
    <property type="term" value="C:large ribosomal subunit"/>
    <property type="evidence" value="ECO:0007669"/>
    <property type="project" value="TreeGrafter"/>
</dbReference>
<dbReference type="GO" id="GO:0070180">
    <property type="term" value="F:large ribosomal subunit rRNA binding"/>
    <property type="evidence" value="ECO:0007669"/>
    <property type="project" value="UniProtKB-UniRule"/>
</dbReference>
<dbReference type="GO" id="GO:0003735">
    <property type="term" value="F:structural constituent of ribosome"/>
    <property type="evidence" value="ECO:0007669"/>
    <property type="project" value="InterPro"/>
</dbReference>
<dbReference type="GO" id="GO:0006412">
    <property type="term" value="P:translation"/>
    <property type="evidence" value="ECO:0007669"/>
    <property type="project" value="UniProtKB-UniRule"/>
</dbReference>
<dbReference type="CDD" id="cd00349">
    <property type="entry name" value="Ribosomal_L11"/>
    <property type="match status" value="1"/>
</dbReference>
<dbReference type="Gene3D" id="1.10.10.250">
    <property type="entry name" value="Ribosomal protein L11, C-terminal domain"/>
    <property type="match status" value="1"/>
</dbReference>
<dbReference type="Gene3D" id="3.30.1550.10">
    <property type="entry name" value="Ribosomal protein L11/L12, N-terminal domain"/>
    <property type="match status" value="1"/>
</dbReference>
<dbReference type="HAMAP" id="MF_00736">
    <property type="entry name" value="Ribosomal_uL11"/>
    <property type="match status" value="1"/>
</dbReference>
<dbReference type="InterPro" id="IPR000911">
    <property type="entry name" value="Ribosomal_uL11"/>
</dbReference>
<dbReference type="InterPro" id="IPR020783">
    <property type="entry name" value="Ribosomal_uL11_C"/>
</dbReference>
<dbReference type="InterPro" id="IPR036769">
    <property type="entry name" value="Ribosomal_uL11_C_sf"/>
</dbReference>
<dbReference type="InterPro" id="IPR020785">
    <property type="entry name" value="Ribosomal_uL11_CS"/>
</dbReference>
<dbReference type="InterPro" id="IPR020784">
    <property type="entry name" value="Ribosomal_uL11_N"/>
</dbReference>
<dbReference type="InterPro" id="IPR036796">
    <property type="entry name" value="Ribosomal_uL11_N_sf"/>
</dbReference>
<dbReference type="NCBIfam" id="NF002232">
    <property type="entry name" value="PRK01143.1"/>
    <property type="match status" value="1"/>
</dbReference>
<dbReference type="PANTHER" id="PTHR11661">
    <property type="entry name" value="60S RIBOSOMAL PROTEIN L12"/>
    <property type="match status" value="1"/>
</dbReference>
<dbReference type="PANTHER" id="PTHR11661:SF1">
    <property type="entry name" value="LARGE RIBOSOMAL SUBUNIT PROTEIN UL11M"/>
    <property type="match status" value="1"/>
</dbReference>
<dbReference type="Pfam" id="PF00298">
    <property type="entry name" value="Ribosomal_L11"/>
    <property type="match status" value="1"/>
</dbReference>
<dbReference type="Pfam" id="PF03946">
    <property type="entry name" value="Ribosomal_L11_N"/>
    <property type="match status" value="1"/>
</dbReference>
<dbReference type="SMART" id="SM00649">
    <property type="entry name" value="RL11"/>
    <property type="match status" value="1"/>
</dbReference>
<dbReference type="SUPFAM" id="SSF54747">
    <property type="entry name" value="Ribosomal L11/L12e N-terminal domain"/>
    <property type="match status" value="1"/>
</dbReference>
<dbReference type="SUPFAM" id="SSF46906">
    <property type="entry name" value="Ribosomal protein L11, C-terminal domain"/>
    <property type="match status" value="1"/>
</dbReference>
<dbReference type="PROSITE" id="PS00359">
    <property type="entry name" value="RIBOSOMAL_L11"/>
    <property type="match status" value="1"/>
</dbReference>
<reference key="1">
    <citation type="journal article" date="2006" name="BMC Genomics">
        <title>The genome of the square archaeon Haloquadratum walsbyi: life at the limits of water activity.</title>
        <authorList>
            <person name="Bolhuis H."/>
            <person name="Palm P."/>
            <person name="Wende A."/>
            <person name="Falb M."/>
            <person name="Rampp M."/>
            <person name="Rodriguez-Valera F."/>
            <person name="Pfeiffer F."/>
            <person name="Oesterhelt D."/>
        </authorList>
    </citation>
    <scope>NUCLEOTIDE SEQUENCE [LARGE SCALE GENOMIC DNA]</scope>
    <source>
        <strain>DSM 16790 / HBSQ001</strain>
    </source>
</reference>
<proteinExistence type="inferred from homology"/>
<protein>
    <recommendedName>
        <fullName evidence="1">Large ribosomal subunit protein uL11</fullName>
    </recommendedName>
    <alternativeName>
        <fullName evidence="3">50S ribosomal protein L11</fullName>
    </alternativeName>
</protein>
<feature type="chain" id="PRO_0000258245" description="Large ribosomal subunit protein uL11">
    <location>
        <begin position="1"/>
        <end position="157"/>
    </location>
</feature>
<feature type="region of interest" description="Disordered" evidence="2">
    <location>
        <begin position="1"/>
        <end position="28"/>
    </location>
</feature>
<feature type="region of interest" description="Disordered" evidence="2">
    <location>
        <begin position="138"/>
        <end position="157"/>
    </location>
</feature>
<feature type="compositionally biased region" description="Basic and acidic residues" evidence="2">
    <location>
        <begin position="139"/>
        <end position="157"/>
    </location>
</feature>